<comment type="catalytic activity">
    <reaction evidence="1">
        <text>(R)-pantothenate + ATP = (R)-4'-phosphopantothenate + ADP + H(+)</text>
        <dbReference type="Rhea" id="RHEA:16373"/>
        <dbReference type="ChEBI" id="CHEBI:10986"/>
        <dbReference type="ChEBI" id="CHEBI:15378"/>
        <dbReference type="ChEBI" id="CHEBI:29032"/>
        <dbReference type="ChEBI" id="CHEBI:30616"/>
        <dbReference type="ChEBI" id="CHEBI:456216"/>
        <dbReference type="EC" id="2.7.1.33"/>
    </reaction>
</comment>
<comment type="pathway">
    <text evidence="1">Cofactor biosynthesis; coenzyme A biosynthesis; CoA from (R)-pantothenate: step 1/5.</text>
</comment>
<comment type="subcellular location">
    <subcellularLocation>
        <location evidence="1">Cytoplasm</location>
    </subcellularLocation>
</comment>
<comment type="similarity">
    <text evidence="1">Belongs to the prokaryotic pantothenate kinase family.</text>
</comment>
<name>COAA_SHEB8</name>
<protein>
    <recommendedName>
        <fullName evidence="1">Pantothenate kinase</fullName>
        <ecNumber evidence="1">2.7.1.33</ecNumber>
    </recommendedName>
    <alternativeName>
        <fullName evidence="1">Pantothenic acid kinase</fullName>
    </alternativeName>
</protein>
<sequence>MTSKNSIQKALYLAFERLQWSELRDSVPLTLSEQDLENLRGINEKISLSEVTDIYLPLSRLLNLIVKAKQQRGLVVDEFLGQKPSRSPYIISIAGSVAVGKSTTARILQALLRHWPEHPKVDLVTTDGFLYPLADLKRKGLLQRKGFPESYDMKMLVEFISAVKSGQPHVKAPIYSHVTYDRVKNQHQTVSQPDILILEGLNVLQTGLDSPVDTRRPFVSDFVDFSIYVDAEEPLLKQWYKERFLQFRSGAFSDKKSYFHHYSSLTDDEANTIAANIWDTINGPNLQLNIQPTRERAHLILQKGQDHLMSHVLMRK</sequence>
<gene>
    <name evidence="1" type="primary">coaA</name>
    <name type="ordered locus">Shew185_0181</name>
</gene>
<feature type="chain" id="PRO_1000043249" description="Pantothenate kinase">
    <location>
        <begin position="1"/>
        <end position="316"/>
    </location>
</feature>
<feature type="binding site" evidence="1">
    <location>
        <begin position="95"/>
        <end position="102"/>
    </location>
    <ligand>
        <name>ATP</name>
        <dbReference type="ChEBI" id="CHEBI:30616"/>
    </ligand>
</feature>
<keyword id="KW-0067">ATP-binding</keyword>
<keyword id="KW-0173">Coenzyme A biosynthesis</keyword>
<keyword id="KW-0963">Cytoplasm</keyword>
<keyword id="KW-0418">Kinase</keyword>
<keyword id="KW-0547">Nucleotide-binding</keyword>
<keyword id="KW-0808">Transferase</keyword>
<reference key="1">
    <citation type="submission" date="2007-07" db="EMBL/GenBank/DDBJ databases">
        <title>Complete sequence of chromosome of Shewanella baltica OS185.</title>
        <authorList>
            <consortium name="US DOE Joint Genome Institute"/>
            <person name="Copeland A."/>
            <person name="Lucas S."/>
            <person name="Lapidus A."/>
            <person name="Barry K."/>
            <person name="Glavina del Rio T."/>
            <person name="Dalin E."/>
            <person name="Tice H."/>
            <person name="Pitluck S."/>
            <person name="Sims D."/>
            <person name="Brettin T."/>
            <person name="Bruce D."/>
            <person name="Detter J.C."/>
            <person name="Han C."/>
            <person name="Schmutz J."/>
            <person name="Larimer F."/>
            <person name="Land M."/>
            <person name="Hauser L."/>
            <person name="Kyrpides N."/>
            <person name="Mikhailova N."/>
            <person name="Brettar I."/>
            <person name="Rodrigues J."/>
            <person name="Konstantinidis K."/>
            <person name="Tiedje J."/>
            <person name="Richardson P."/>
        </authorList>
    </citation>
    <scope>NUCLEOTIDE SEQUENCE [LARGE SCALE GENOMIC DNA]</scope>
    <source>
        <strain>OS185</strain>
    </source>
</reference>
<organism>
    <name type="scientific">Shewanella baltica (strain OS185)</name>
    <dbReference type="NCBI Taxonomy" id="402882"/>
    <lineage>
        <taxon>Bacteria</taxon>
        <taxon>Pseudomonadati</taxon>
        <taxon>Pseudomonadota</taxon>
        <taxon>Gammaproteobacteria</taxon>
        <taxon>Alteromonadales</taxon>
        <taxon>Shewanellaceae</taxon>
        <taxon>Shewanella</taxon>
    </lineage>
</organism>
<evidence type="ECO:0000255" key="1">
    <source>
        <dbReference type="HAMAP-Rule" id="MF_00215"/>
    </source>
</evidence>
<dbReference type="EC" id="2.7.1.33" evidence="1"/>
<dbReference type="EMBL" id="CP000753">
    <property type="protein sequence ID" value="ABS06352.1"/>
    <property type="molecule type" value="Genomic_DNA"/>
</dbReference>
<dbReference type="RefSeq" id="WP_011848150.1">
    <property type="nucleotide sequence ID" value="NC_009665.1"/>
</dbReference>
<dbReference type="SMR" id="A6WHR3"/>
<dbReference type="KEGG" id="sbm:Shew185_0181"/>
<dbReference type="HOGENOM" id="CLU_053818_1_1_6"/>
<dbReference type="UniPathway" id="UPA00241">
    <property type="reaction ID" value="UER00352"/>
</dbReference>
<dbReference type="GO" id="GO:0005737">
    <property type="term" value="C:cytoplasm"/>
    <property type="evidence" value="ECO:0007669"/>
    <property type="project" value="UniProtKB-SubCell"/>
</dbReference>
<dbReference type="GO" id="GO:0005524">
    <property type="term" value="F:ATP binding"/>
    <property type="evidence" value="ECO:0007669"/>
    <property type="project" value="UniProtKB-UniRule"/>
</dbReference>
<dbReference type="GO" id="GO:0004594">
    <property type="term" value="F:pantothenate kinase activity"/>
    <property type="evidence" value="ECO:0007669"/>
    <property type="project" value="UniProtKB-UniRule"/>
</dbReference>
<dbReference type="GO" id="GO:0015937">
    <property type="term" value="P:coenzyme A biosynthetic process"/>
    <property type="evidence" value="ECO:0007669"/>
    <property type="project" value="UniProtKB-UniRule"/>
</dbReference>
<dbReference type="CDD" id="cd02025">
    <property type="entry name" value="PanK"/>
    <property type="match status" value="1"/>
</dbReference>
<dbReference type="FunFam" id="3.40.50.300:FF:000242">
    <property type="entry name" value="Pantothenate kinase"/>
    <property type="match status" value="1"/>
</dbReference>
<dbReference type="Gene3D" id="3.40.50.300">
    <property type="entry name" value="P-loop containing nucleotide triphosphate hydrolases"/>
    <property type="match status" value="1"/>
</dbReference>
<dbReference type="HAMAP" id="MF_00215">
    <property type="entry name" value="Pantothen_kinase_1"/>
    <property type="match status" value="1"/>
</dbReference>
<dbReference type="InterPro" id="IPR027417">
    <property type="entry name" value="P-loop_NTPase"/>
</dbReference>
<dbReference type="InterPro" id="IPR004566">
    <property type="entry name" value="PanK"/>
</dbReference>
<dbReference type="InterPro" id="IPR006083">
    <property type="entry name" value="PRK/URK"/>
</dbReference>
<dbReference type="NCBIfam" id="TIGR00554">
    <property type="entry name" value="panK_bact"/>
    <property type="match status" value="1"/>
</dbReference>
<dbReference type="PANTHER" id="PTHR10285">
    <property type="entry name" value="URIDINE KINASE"/>
    <property type="match status" value="1"/>
</dbReference>
<dbReference type="Pfam" id="PF00485">
    <property type="entry name" value="PRK"/>
    <property type="match status" value="1"/>
</dbReference>
<dbReference type="PIRSF" id="PIRSF000545">
    <property type="entry name" value="Pantothenate_kin"/>
    <property type="match status" value="1"/>
</dbReference>
<dbReference type="SUPFAM" id="SSF52540">
    <property type="entry name" value="P-loop containing nucleoside triphosphate hydrolases"/>
    <property type="match status" value="1"/>
</dbReference>
<accession>A6WHR3</accession>
<proteinExistence type="inferred from homology"/>